<feature type="chain" id="PRO_1000121103" description="DNA replication and repair protein RecF">
    <location>
        <begin position="1"/>
        <end position="357"/>
    </location>
</feature>
<feature type="binding site" evidence="1">
    <location>
        <begin position="31"/>
        <end position="38"/>
    </location>
    <ligand>
        <name>ATP</name>
        <dbReference type="ChEBI" id="CHEBI:30616"/>
    </ligand>
</feature>
<comment type="function">
    <text evidence="1">The RecF protein is involved in DNA metabolism; it is required for DNA replication and normal SOS inducibility. RecF binds preferentially to single-stranded, linear DNA. It also seems to bind ATP.</text>
</comment>
<comment type="subcellular location">
    <subcellularLocation>
        <location evidence="1">Cytoplasm</location>
    </subcellularLocation>
</comment>
<comment type="similarity">
    <text evidence="1">Belongs to the RecF family.</text>
</comment>
<proteinExistence type="inferred from homology"/>
<evidence type="ECO:0000255" key="1">
    <source>
        <dbReference type="HAMAP-Rule" id="MF_00365"/>
    </source>
</evidence>
<protein>
    <recommendedName>
        <fullName evidence="1">DNA replication and repair protein RecF</fullName>
    </recommendedName>
</protein>
<sequence length="357" mass="41227">MPYIGSLKVNQFRNLADVDITPHSQFNFFFGQNGAGKTSILESIYYLSVGRSFRTHLPQRLIQDNTDRFLIFITLYNGTQFIPLGVERDCHGDRCLRINGETASSWSLAAKRLPLCSLSAMSHRFLLDGPRVRRQFLDWLMFHVEPSFFSIWQRLQRSLKQRNAALKAKLPLGEITHWDKMLVEDGERLHQLRQNVVTEFRPLFTQMLQQFLPAYPLIGHYFRGWSEKYSLMEQLQINLKQDLQRGYTQAGPQRADFRLTLRDLPAQDILSQGQQKLVTYALHFAQGLLLKEKTGISPIYLIDDLPAELDANKRDCVIDLVNYLESQVFISGIDPNEIRLPPHSTLFHVKHGKVAAL</sequence>
<accession>A9KEV0</accession>
<keyword id="KW-0067">ATP-binding</keyword>
<keyword id="KW-0963">Cytoplasm</keyword>
<keyword id="KW-0227">DNA damage</keyword>
<keyword id="KW-0234">DNA repair</keyword>
<keyword id="KW-0235">DNA replication</keyword>
<keyword id="KW-0238">DNA-binding</keyword>
<keyword id="KW-0547">Nucleotide-binding</keyword>
<keyword id="KW-0742">SOS response</keyword>
<reference key="1">
    <citation type="journal article" date="2009" name="Infect. Immun.">
        <title>Comparative genomics reveal extensive transposon-mediated genomic plasticity and diversity among potential effector proteins within the genus Coxiella.</title>
        <authorList>
            <person name="Beare P.A."/>
            <person name="Unsworth N."/>
            <person name="Andoh M."/>
            <person name="Voth D.E."/>
            <person name="Omsland A."/>
            <person name="Gilk S.D."/>
            <person name="Williams K.P."/>
            <person name="Sobral B.W."/>
            <person name="Kupko J.J. III"/>
            <person name="Porcella S.F."/>
            <person name="Samuel J.E."/>
            <person name="Heinzen R.A."/>
        </authorList>
    </citation>
    <scope>NUCLEOTIDE SEQUENCE [LARGE SCALE GENOMIC DNA]</scope>
    <source>
        <strain>Dugway 5J108-111</strain>
    </source>
</reference>
<dbReference type="EMBL" id="CP000733">
    <property type="protein sequence ID" value="ABS77876.1"/>
    <property type="molecule type" value="Genomic_DNA"/>
</dbReference>
<dbReference type="RefSeq" id="WP_011996356.1">
    <property type="nucleotide sequence ID" value="NC_009727.1"/>
</dbReference>
<dbReference type="SMR" id="A9KEV0"/>
<dbReference type="KEGG" id="cbd:CBUD_0003"/>
<dbReference type="HOGENOM" id="CLU_040267_0_0_6"/>
<dbReference type="Proteomes" id="UP000008555">
    <property type="component" value="Chromosome"/>
</dbReference>
<dbReference type="GO" id="GO:0005737">
    <property type="term" value="C:cytoplasm"/>
    <property type="evidence" value="ECO:0007669"/>
    <property type="project" value="UniProtKB-SubCell"/>
</dbReference>
<dbReference type="GO" id="GO:0005524">
    <property type="term" value="F:ATP binding"/>
    <property type="evidence" value="ECO:0007669"/>
    <property type="project" value="UniProtKB-UniRule"/>
</dbReference>
<dbReference type="GO" id="GO:0003697">
    <property type="term" value="F:single-stranded DNA binding"/>
    <property type="evidence" value="ECO:0007669"/>
    <property type="project" value="UniProtKB-UniRule"/>
</dbReference>
<dbReference type="GO" id="GO:0006260">
    <property type="term" value="P:DNA replication"/>
    <property type="evidence" value="ECO:0007669"/>
    <property type="project" value="UniProtKB-UniRule"/>
</dbReference>
<dbReference type="GO" id="GO:0000731">
    <property type="term" value="P:DNA synthesis involved in DNA repair"/>
    <property type="evidence" value="ECO:0007669"/>
    <property type="project" value="TreeGrafter"/>
</dbReference>
<dbReference type="GO" id="GO:0006302">
    <property type="term" value="P:double-strand break repair"/>
    <property type="evidence" value="ECO:0007669"/>
    <property type="project" value="TreeGrafter"/>
</dbReference>
<dbReference type="GO" id="GO:0009432">
    <property type="term" value="P:SOS response"/>
    <property type="evidence" value="ECO:0007669"/>
    <property type="project" value="UniProtKB-UniRule"/>
</dbReference>
<dbReference type="Gene3D" id="3.40.50.300">
    <property type="entry name" value="P-loop containing nucleotide triphosphate hydrolases"/>
    <property type="match status" value="1"/>
</dbReference>
<dbReference type="Gene3D" id="1.20.1050.90">
    <property type="entry name" value="RecF/RecN/SMC, N-terminal domain"/>
    <property type="match status" value="1"/>
</dbReference>
<dbReference type="HAMAP" id="MF_00365">
    <property type="entry name" value="RecF"/>
    <property type="match status" value="1"/>
</dbReference>
<dbReference type="InterPro" id="IPR001238">
    <property type="entry name" value="DNA-binding_RecF"/>
</dbReference>
<dbReference type="InterPro" id="IPR018078">
    <property type="entry name" value="DNA-binding_RecF_CS"/>
</dbReference>
<dbReference type="InterPro" id="IPR027417">
    <property type="entry name" value="P-loop_NTPase"/>
</dbReference>
<dbReference type="InterPro" id="IPR003395">
    <property type="entry name" value="RecF/RecN/SMC_N"/>
</dbReference>
<dbReference type="InterPro" id="IPR042174">
    <property type="entry name" value="RecF_2"/>
</dbReference>
<dbReference type="NCBIfam" id="TIGR00611">
    <property type="entry name" value="recf"/>
    <property type="match status" value="1"/>
</dbReference>
<dbReference type="PANTHER" id="PTHR32182">
    <property type="entry name" value="DNA REPLICATION AND REPAIR PROTEIN RECF"/>
    <property type="match status" value="1"/>
</dbReference>
<dbReference type="PANTHER" id="PTHR32182:SF0">
    <property type="entry name" value="DNA REPLICATION AND REPAIR PROTEIN RECF"/>
    <property type="match status" value="1"/>
</dbReference>
<dbReference type="Pfam" id="PF02463">
    <property type="entry name" value="SMC_N"/>
    <property type="match status" value="1"/>
</dbReference>
<dbReference type="SUPFAM" id="SSF52540">
    <property type="entry name" value="P-loop containing nucleoside triphosphate hydrolases"/>
    <property type="match status" value="1"/>
</dbReference>
<dbReference type="PROSITE" id="PS00617">
    <property type="entry name" value="RECF_1"/>
    <property type="match status" value="1"/>
</dbReference>
<dbReference type="PROSITE" id="PS00618">
    <property type="entry name" value="RECF_2"/>
    <property type="match status" value="1"/>
</dbReference>
<organism>
    <name type="scientific">Coxiella burnetii (strain Dugway 5J108-111)</name>
    <dbReference type="NCBI Taxonomy" id="434922"/>
    <lineage>
        <taxon>Bacteria</taxon>
        <taxon>Pseudomonadati</taxon>
        <taxon>Pseudomonadota</taxon>
        <taxon>Gammaproteobacteria</taxon>
        <taxon>Legionellales</taxon>
        <taxon>Coxiellaceae</taxon>
        <taxon>Coxiella</taxon>
    </lineage>
</organism>
<gene>
    <name evidence="1" type="primary">recF</name>
    <name type="ordered locus">CBUD_0003</name>
</gene>
<name>RECF_COXBN</name>